<name>RL16_CHESB</name>
<protein>
    <recommendedName>
        <fullName evidence="1">Large ribosomal subunit protein uL16</fullName>
    </recommendedName>
    <alternativeName>
        <fullName evidence="2">50S ribosomal protein L16</fullName>
    </alternativeName>
</protein>
<proteinExistence type="inferred from homology"/>
<evidence type="ECO:0000255" key="1">
    <source>
        <dbReference type="HAMAP-Rule" id="MF_01342"/>
    </source>
</evidence>
<evidence type="ECO:0000305" key="2"/>
<keyword id="KW-0687">Ribonucleoprotein</keyword>
<keyword id="KW-0689">Ribosomal protein</keyword>
<keyword id="KW-0694">RNA-binding</keyword>
<keyword id="KW-0699">rRNA-binding</keyword>
<keyword id="KW-0820">tRNA-binding</keyword>
<organism>
    <name type="scientific">Chelativorans sp. (strain BNC1)</name>
    <dbReference type="NCBI Taxonomy" id="266779"/>
    <lineage>
        <taxon>Bacteria</taxon>
        <taxon>Pseudomonadati</taxon>
        <taxon>Pseudomonadota</taxon>
        <taxon>Alphaproteobacteria</taxon>
        <taxon>Hyphomicrobiales</taxon>
        <taxon>Phyllobacteriaceae</taxon>
        <taxon>Chelativorans</taxon>
    </lineage>
</organism>
<comment type="function">
    <text evidence="1">Binds 23S rRNA and is also seen to make contacts with the A and possibly P site tRNAs.</text>
</comment>
<comment type="subunit">
    <text evidence="1">Part of the 50S ribosomal subunit.</text>
</comment>
<comment type="similarity">
    <text evidence="1">Belongs to the universal ribosomal protein uL16 family.</text>
</comment>
<reference key="1">
    <citation type="submission" date="2006-06" db="EMBL/GenBank/DDBJ databases">
        <title>Complete sequence of chromosome of Mesorhizobium sp. BNC1.</title>
        <authorList>
            <consortium name="US DOE Joint Genome Institute"/>
            <person name="Copeland A."/>
            <person name="Lucas S."/>
            <person name="Lapidus A."/>
            <person name="Barry K."/>
            <person name="Detter J.C."/>
            <person name="Glavina del Rio T."/>
            <person name="Hammon N."/>
            <person name="Israni S."/>
            <person name="Dalin E."/>
            <person name="Tice H."/>
            <person name="Pitluck S."/>
            <person name="Chertkov O."/>
            <person name="Brettin T."/>
            <person name="Bruce D."/>
            <person name="Han C."/>
            <person name="Tapia R."/>
            <person name="Gilna P."/>
            <person name="Schmutz J."/>
            <person name="Larimer F."/>
            <person name="Land M."/>
            <person name="Hauser L."/>
            <person name="Kyrpides N."/>
            <person name="Mikhailova N."/>
            <person name="Richardson P."/>
        </authorList>
    </citation>
    <scope>NUCLEOTIDE SEQUENCE [LARGE SCALE GENOMIC DNA]</scope>
    <source>
        <strain>BNC1</strain>
    </source>
</reference>
<feature type="chain" id="PRO_0000251645" description="Large ribosomal subunit protein uL16">
    <location>
        <begin position="1"/>
        <end position="137"/>
    </location>
</feature>
<gene>
    <name evidence="1" type="primary">rplP</name>
    <name type="ordered locus">Meso_1671</name>
</gene>
<accession>Q11HQ9</accession>
<sequence>MLQPKRTKFRKQFKGRIHGAAKGGTDLNFGAFGLKALEPERVTARQIEAARRAITRQMKRQGRVWIRVFPDVPVTAKPTEVRMGKGKGSVEFWACRVKPGRIMFEIDGVAEDIAREALRLGAAKLPIKTRFIQRIAE</sequence>
<dbReference type="EMBL" id="CP000390">
    <property type="protein sequence ID" value="ABG63066.1"/>
    <property type="molecule type" value="Genomic_DNA"/>
</dbReference>
<dbReference type="SMR" id="Q11HQ9"/>
<dbReference type="STRING" id="266779.Meso_1671"/>
<dbReference type="KEGG" id="mes:Meso_1671"/>
<dbReference type="eggNOG" id="COG0197">
    <property type="taxonomic scope" value="Bacteria"/>
</dbReference>
<dbReference type="HOGENOM" id="CLU_078858_2_1_5"/>
<dbReference type="OrthoDB" id="9802589at2"/>
<dbReference type="GO" id="GO:0022625">
    <property type="term" value="C:cytosolic large ribosomal subunit"/>
    <property type="evidence" value="ECO:0007669"/>
    <property type="project" value="TreeGrafter"/>
</dbReference>
<dbReference type="GO" id="GO:0019843">
    <property type="term" value="F:rRNA binding"/>
    <property type="evidence" value="ECO:0007669"/>
    <property type="project" value="UniProtKB-UniRule"/>
</dbReference>
<dbReference type="GO" id="GO:0003735">
    <property type="term" value="F:structural constituent of ribosome"/>
    <property type="evidence" value="ECO:0007669"/>
    <property type="project" value="InterPro"/>
</dbReference>
<dbReference type="GO" id="GO:0000049">
    <property type="term" value="F:tRNA binding"/>
    <property type="evidence" value="ECO:0007669"/>
    <property type="project" value="UniProtKB-KW"/>
</dbReference>
<dbReference type="GO" id="GO:0006412">
    <property type="term" value="P:translation"/>
    <property type="evidence" value="ECO:0007669"/>
    <property type="project" value="UniProtKB-UniRule"/>
</dbReference>
<dbReference type="CDD" id="cd01433">
    <property type="entry name" value="Ribosomal_L16_L10e"/>
    <property type="match status" value="1"/>
</dbReference>
<dbReference type="FunFam" id="3.90.1170.10:FF:000001">
    <property type="entry name" value="50S ribosomal protein L16"/>
    <property type="match status" value="1"/>
</dbReference>
<dbReference type="Gene3D" id="3.90.1170.10">
    <property type="entry name" value="Ribosomal protein L10e/L16"/>
    <property type="match status" value="1"/>
</dbReference>
<dbReference type="HAMAP" id="MF_01342">
    <property type="entry name" value="Ribosomal_uL16"/>
    <property type="match status" value="1"/>
</dbReference>
<dbReference type="InterPro" id="IPR047873">
    <property type="entry name" value="Ribosomal_uL16"/>
</dbReference>
<dbReference type="InterPro" id="IPR000114">
    <property type="entry name" value="Ribosomal_uL16_bact-type"/>
</dbReference>
<dbReference type="InterPro" id="IPR020798">
    <property type="entry name" value="Ribosomal_uL16_CS"/>
</dbReference>
<dbReference type="InterPro" id="IPR016180">
    <property type="entry name" value="Ribosomal_uL16_dom"/>
</dbReference>
<dbReference type="InterPro" id="IPR036920">
    <property type="entry name" value="Ribosomal_uL16_sf"/>
</dbReference>
<dbReference type="NCBIfam" id="TIGR01164">
    <property type="entry name" value="rplP_bact"/>
    <property type="match status" value="1"/>
</dbReference>
<dbReference type="PANTHER" id="PTHR12220">
    <property type="entry name" value="50S/60S RIBOSOMAL PROTEIN L16"/>
    <property type="match status" value="1"/>
</dbReference>
<dbReference type="PANTHER" id="PTHR12220:SF13">
    <property type="entry name" value="LARGE RIBOSOMAL SUBUNIT PROTEIN UL16M"/>
    <property type="match status" value="1"/>
</dbReference>
<dbReference type="Pfam" id="PF00252">
    <property type="entry name" value="Ribosomal_L16"/>
    <property type="match status" value="1"/>
</dbReference>
<dbReference type="PRINTS" id="PR00060">
    <property type="entry name" value="RIBOSOMALL16"/>
</dbReference>
<dbReference type="SUPFAM" id="SSF54686">
    <property type="entry name" value="Ribosomal protein L16p/L10e"/>
    <property type="match status" value="1"/>
</dbReference>
<dbReference type="PROSITE" id="PS00586">
    <property type="entry name" value="RIBOSOMAL_L16_1"/>
    <property type="match status" value="1"/>
</dbReference>
<dbReference type="PROSITE" id="PS00701">
    <property type="entry name" value="RIBOSOMAL_L16_2"/>
    <property type="match status" value="1"/>
</dbReference>